<name>BAG5_CHICK</name>
<organism>
    <name type="scientific">Gallus gallus</name>
    <name type="common">Chicken</name>
    <dbReference type="NCBI Taxonomy" id="9031"/>
    <lineage>
        <taxon>Eukaryota</taxon>
        <taxon>Metazoa</taxon>
        <taxon>Chordata</taxon>
        <taxon>Craniata</taxon>
        <taxon>Vertebrata</taxon>
        <taxon>Euteleostomi</taxon>
        <taxon>Archelosauria</taxon>
        <taxon>Archosauria</taxon>
        <taxon>Dinosauria</taxon>
        <taxon>Saurischia</taxon>
        <taxon>Theropoda</taxon>
        <taxon>Coelurosauria</taxon>
        <taxon>Aves</taxon>
        <taxon>Neognathae</taxon>
        <taxon>Galloanserae</taxon>
        <taxon>Galliformes</taxon>
        <taxon>Phasianidae</taxon>
        <taxon>Phasianinae</taxon>
        <taxon>Gallus</taxon>
    </lineage>
</organism>
<keyword id="KW-0143">Chaperone</keyword>
<keyword id="KW-1185">Reference proteome</keyword>
<keyword id="KW-0677">Repeat</keyword>
<comment type="function">
    <text evidence="3">Co-chaperone for HSP/HSP70 proteins. It functions as a nucleotide-exchange factor promoting the release of ADP from HSP70, thereby activating HSP70-mediated protein refolding.</text>
</comment>
<comment type="subunit">
    <text evidence="1">Binds to the ATPase domain of HSP/HSC70 chaperones.</text>
</comment>
<comment type="subcellular location">
    <text evidence="2">In cardiomyocytes, localized at specialized membrane contact sites between T-tubules and the sarcoplasmic reticulum, known as junctional membrane complexes.</text>
</comment>
<comment type="domain">
    <text evidence="1">The fifth BAG domain is responsible for the interaction with HSP70 nucleotide-binding domain.</text>
</comment>
<sequence length="450" mass="51167">MDMGNQHPSIKRLHEIQKEVKEIEQQVAVFSGLSTDRDYKKLERSLTKQLFEIDSVDTEGKGDIQQARKRAAQETERLLKELEQNANHPRRLEIEAIFKEAQALVEREITPFYQGGNCVNEEFEEGIQDVVLRLTQVKTGGKVSLRKARYRTLTKVCAVQEIIESCAKRQLSLPLSNDAHPSVSKINSVMCEVNKARGTLIALLMGVSSNDTCRHLACVLTGLVADLDALDVCGRTEIRNYRKEVVEEINKLQKYLDLDEEANSTHAYDLAQNHSILKIEEIRKKLKEVNSLLLKTENASDLYLGSKAELQGLIAQLDEVSLGKNPCIREARRRAVIEVQTLITYIDLKEALGKRQMYAEQTAAEHQSHKAVWTVLGNLSQIQQEVISFDGNKTDKNYMRLEELLTKQLLALDAVDPQGDERCKAARKQAVKLAQNILYYLDMKTDEWEY</sequence>
<accession>Q5F486</accession>
<dbReference type="EMBL" id="AJ851414">
    <property type="protein sequence ID" value="CAH65048.1"/>
    <property type="molecule type" value="mRNA"/>
</dbReference>
<dbReference type="RefSeq" id="NP_001026382.1">
    <property type="nucleotide sequence ID" value="NM_001031211.1"/>
</dbReference>
<dbReference type="SMR" id="Q5F486"/>
<dbReference type="FunCoup" id="Q5F486">
    <property type="interactions" value="966"/>
</dbReference>
<dbReference type="STRING" id="9031.ENSGALP00000057492"/>
<dbReference type="PaxDb" id="9031-ENSGALP00000018771"/>
<dbReference type="GeneID" id="423482"/>
<dbReference type="KEGG" id="gga:423482"/>
<dbReference type="CTD" id="9529"/>
<dbReference type="VEuPathDB" id="HostDB:geneid_423482"/>
<dbReference type="eggNOG" id="KOG4361">
    <property type="taxonomic scope" value="Eukaryota"/>
</dbReference>
<dbReference type="InParanoid" id="Q5F486"/>
<dbReference type="OrthoDB" id="417450at2759"/>
<dbReference type="PhylomeDB" id="Q5F486"/>
<dbReference type="PRO" id="PR:Q5F486"/>
<dbReference type="Proteomes" id="UP000000539">
    <property type="component" value="Unassembled WGS sequence"/>
</dbReference>
<dbReference type="GO" id="GO:0005737">
    <property type="term" value="C:cytoplasm"/>
    <property type="evidence" value="ECO:0000318"/>
    <property type="project" value="GO_Central"/>
</dbReference>
<dbReference type="GO" id="GO:0005829">
    <property type="term" value="C:cytosol"/>
    <property type="evidence" value="ECO:0000318"/>
    <property type="project" value="GO_Central"/>
</dbReference>
<dbReference type="GO" id="GO:0016020">
    <property type="term" value="C:membrane"/>
    <property type="evidence" value="ECO:0000318"/>
    <property type="project" value="GO_Central"/>
</dbReference>
<dbReference type="GO" id="GO:0005634">
    <property type="term" value="C:nucleus"/>
    <property type="evidence" value="ECO:0000318"/>
    <property type="project" value="GO_Central"/>
</dbReference>
<dbReference type="GO" id="GO:0000774">
    <property type="term" value="F:adenyl-nucleotide exchange factor activity"/>
    <property type="evidence" value="ECO:0000318"/>
    <property type="project" value="GO_Central"/>
</dbReference>
<dbReference type="GO" id="GO:0051087">
    <property type="term" value="F:protein-folding chaperone binding"/>
    <property type="evidence" value="ECO:0000318"/>
    <property type="project" value="GO_Central"/>
</dbReference>
<dbReference type="GO" id="GO:0031397">
    <property type="term" value="P:negative regulation of protein ubiquitination"/>
    <property type="evidence" value="ECO:0000318"/>
    <property type="project" value="GO_Central"/>
</dbReference>
<dbReference type="GO" id="GO:0050821">
    <property type="term" value="P:protein stabilization"/>
    <property type="evidence" value="ECO:0000318"/>
    <property type="project" value="GO_Central"/>
</dbReference>
<dbReference type="GO" id="GO:0090083">
    <property type="term" value="P:regulation of inclusion body assembly"/>
    <property type="evidence" value="ECO:0000318"/>
    <property type="project" value="GO_Central"/>
</dbReference>
<dbReference type="Gene3D" id="1.20.58.120">
    <property type="entry name" value="BAG domain"/>
    <property type="match status" value="5"/>
</dbReference>
<dbReference type="InterPro" id="IPR039773">
    <property type="entry name" value="BAG_chaperone_regulator"/>
</dbReference>
<dbReference type="InterPro" id="IPR036533">
    <property type="entry name" value="BAG_dom_sf"/>
</dbReference>
<dbReference type="InterPro" id="IPR003103">
    <property type="entry name" value="BAG_domain"/>
</dbReference>
<dbReference type="PANTHER" id="PTHR12329:SF2">
    <property type="entry name" value="BAG FAMILY MOLECULAR CHAPERONE REGULATOR 5"/>
    <property type="match status" value="1"/>
</dbReference>
<dbReference type="PANTHER" id="PTHR12329">
    <property type="entry name" value="BCL2-ASSOCIATED ATHANOGENE"/>
    <property type="match status" value="1"/>
</dbReference>
<dbReference type="Pfam" id="PF02179">
    <property type="entry name" value="BAG"/>
    <property type="match status" value="4"/>
</dbReference>
<dbReference type="SMART" id="SM00264">
    <property type="entry name" value="BAG"/>
    <property type="match status" value="4"/>
</dbReference>
<dbReference type="SUPFAM" id="SSF63491">
    <property type="entry name" value="BAG domain"/>
    <property type="match status" value="4"/>
</dbReference>
<dbReference type="PROSITE" id="PS51035">
    <property type="entry name" value="BAG"/>
    <property type="match status" value="4"/>
</dbReference>
<proteinExistence type="evidence at transcript level"/>
<gene>
    <name type="primary">BAG5</name>
    <name type="ORF">RCJMB04_2e5</name>
</gene>
<evidence type="ECO:0000250" key="1"/>
<evidence type="ECO:0000250" key="2">
    <source>
        <dbReference type="UniProtKB" id="Q8CI32"/>
    </source>
</evidence>
<evidence type="ECO:0000250" key="3">
    <source>
        <dbReference type="UniProtKB" id="Q9UL15"/>
    </source>
</evidence>
<evidence type="ECO:0000255" key="4">
    <source>
        <dbReference type="PROSITE-ProRule" id="PRU00369"/>
    </source>
</evidence>
<feature type="chain" id="PRO_0000088875" description="BAG family molecular chaperone regulator 5">
    <location>
        <begin position="1"/>
        <end position="450"/>
    </location>
</feature>
<feature type="domain" description="BAG 1" evidence="4">
    <location>
        <begin position="9"/>
        <end position="86"/>
    </location>
</feature>
<feature type="domain" description="BAG 2" evidence="4">
    <location>
        <begin position="95"/>
        <end position="167"/>
    </location>
</feature>
<feature type="domain" description="BAG 3" evidence="4">
    <location>
        <begin position="182"/>
        <end position="260"/>
    </location>
</feature>
<feature type="domain" description="BAG 4" evidence="4">
    <location>
        <begin position="275"/>
        <end position="350"/>
    </location>
</feature>
<feature type="domain" description="BAG 5" evidence="4">
    <location>
        <begin position="365"/>
        <end position="442"/>
    </location>
</feature>
<protein>
    <recommendedName>
        <fullName>BAG family molecular chaperone regulator 5</fullName>
        <shortName>BAG-5</shortName>
    </recommendedName>
    <alternativeName>
        <fullName>Bcl-2-associated athanogene 5</fullName>
    </alternativeName>
</protein>
<reference key="1">
    <citation type="journal article" date="2005" name="Genome Biol.">
        <title>Full-length cDNAs from chicken bursal lymphocytes to facilitate gene function analysis.</title>
        <authorList>
            <person name="Caldwell R.B."/>
            <person name="Kierzek A.M."/>
            <person name="Arakawa H."/>
            <person name="Bezzubov Y."/>
            <person name="Zaim J."/>
            <person name="Fiedler P."/>
            <person name="Kutter S."/>
            <person name="Blagodatski A."/>
            <person name="Kostovska D."/>
            <person name="Koter M."/>
            <person name="Plachy J."/>
            <person name="Carninci P."/>
            <person name="Hayashizaki Y."/>
            <person name="Buerstedde J.-M."/>
        </authorList>
    </citation>
    <scope>NUCLEOTIDE SEQUENCE [LARGE SCALE MRNA]</scope>
    <source>
        <strain>CB</strain>
        <tissue>Bursa of Fabricius</tissue>
    </source>
</reference>